<gene>
    <name evidence="1" type="primary">upp</name>
    <name type="ordered locus">WS1653</name>
</gene>
<reference key="1">
    <citation type="journal article" date="2003" name="Proc. Natl. Acad. Sci. U.S.A.">
        <title>Complete genome sequence and analysis of Wolinella succinogenes.</title>
        <authorList>
            <person name="Baar C."/>
            <person name="Eppinger M."/>
            <person name="Raddatz G."/>
            <person name="Simon J."/>
            <person name="Lanz C."/>
            <person name="Klimmek O."/>
            <person name="Nandakumar R."/>
            <person name="Gross R."/>
            <person name="Rosinus A."/>
            <person name="Keller H."/>
            <person name="Jagtap P."/>
            <person name="Linke B."/>
            <person name="Meyer F."/>
            <person name="Lederer H."/>
            <person name="Schuster S.C."/>
        </authorList>
    </citation>
    <scope>NUCLEOTIDE SEQUENCE [LARGE SCALE GENOMIC DNA]</scope>
    <source>
        <strain>ATCC 29543 / DSM 1740 / CCUG 13145 / JCM 31913 / LMG 7466 / NCTC 11488 / FDC 602W</strain>
    </source>
</reference>
<proteinExistence type="inferred from homology"/>
<protein>
    <recommendedName>
        <fullName evidence="1">Uracil phosphoribosyltransferase</fullName>
        <ecNumber evidence="1">2.4.2.9</ecNumber>
    </recommendedName>
    <alternativeName>
        <fullName evidence="1">UMP pyrophosphorylase</fullName>
    </alternativeName>
    <alternativeName>
        <fullName evidence="1">UPRTase</fullName>
    </alternativeName>
</protein>
<comment type="function">
    <text evidence="1">Catalyzes the conversion of uracil and 5-phospho-alpha-D-ribose 1-diphosphate (PRPP) to UMP and diphosphate.</text>
</comment>
<comment type="catalytic activity">
    <reaction evidence="1">
        <text>UMP + diphosphate = 5-phospho-alpha-D-ribose 1-diphosphate + uracil</text>
        <dbReference type="Rhea" id="RHEA:13017"/>
        <dbReference type="ChEBI" id="CHEBI:17568"/>
        <dbReference type="ChEBI" id="CHEBI:33019"/>
        <dbReference type="ChEBI" id="CHEBI:57865"/>
        <dbReference type="ChEBI" id="CHEBI:58017"/>
        <dbReference type="EC" id="2.4.2.9"/>
    </reaction>
</comment>
<comment type="cofactor">
    <cofactor evidence="1">
        <name>Mg(2+)</name>
        <dbReference type="ChEBI" id="CHEBI:18420"/>
    </cofactor>
    <text evidence="1">Binds 1 Mg(2+) ion per subunit. The magnesium is bound as Mg-PRPP.</text>
</comment>
<comment type="activity regulation">
    <text evidence="1">Allosterically activated by GTP.</text>
</comment>
<comment type="pathway">
    <text evidence="1">Pyrimidine metabolism; UMP biosynthesis via salvage pathway; UMP from uracil: step 1/1.</text>
</comment>
<comment type="similarity">
    <text evidence="1">Belongs to the UPRTase family.</text>
</comment>
<sequence>MAVIEVKHPLIEHKITNIRDVNTDTKSFKENLAEISSLILYEATKQLELQEVEVETPLTKTKAYRLSDSSLAVVPILRAGLGMVDGVMSLIPNARIGHIGVYRDEETLEPKHYYCKLPEDIAKRSVFLVDPMLATGGSAIYAIDYLKSQGVPKVTFLCILAAPEGIKAVTTAHPDVDIFIAKIDERLTEHGYIFPGLGDAGDRVFGTK</sequence>
<dbReference type="EC" id="2.4.2.9" evidence="1"/>
<dbReference type="EMBL" id="BX571661">
    <property type="protein sequence ID" value="CAE10684.1"/>
    <property type="molecule type" value="Genomic_DNA"/>
</dbReference>
<dbReference type="RefSeq" id="WP_011139468.1">
    <property type="nucleotide sequence ID" value="NC_005090.1"/>
</dbReference>
<dbReference type="SMR" id="Q7M8H6"/>
<dbReference type="STRING" id="273121.WS1653"/>
<dbReference type="KEGG" id="wsu:WS1653"/>
<dbReference type="eggNOG" id="COG0035">
    <property type="taxonomic scope" value="Bacteria"/>
</dbReference>
<dbReference type="HOGENOM" id="CLU_067096_2_2_7"/>
<dbReference type="UniPathway" id="UPA00574">
    <property type="reaction ID" value="UER00636"/>
</dbReference>
<dbReference type="Proteomes" id="UP000000422">
    <property type="component" value="Chromosome"/>
</dbReference>
<dbReference type="GO" id="GO:0005525">
    <property type="term" value="F:GTP binding"/>
    <property type="evidence" value="ECO:0007669"/>
    <property type="project" value="UniProtKB-KW"/>
</dbReference>
<dbReference type="GO" id="GO:0000287">
    <property type="term" value="F:magnesium ion binding"/>
    <property type="evidence" value="ECO:0007669"/>
    <property type="project" value="UniProtKB-UniRule"/>
</dbReference>
<dbReference type="GO" id="GO:0004845">
    <property type="term" value="F:uracil phosphoribosyltransferase activity"/>
    <property type="evidence" value="ECO:0007669"/>
    <property type="project" value="UniProtKB-UniRule"/>
</dbReference>
<dbReference type="GO" id="GO:0044206">
    <property type="term" value="P:UMP salvage"/>
    <property type="evidence" value="ECO:0007669"/>
    <property type="project" value="UniProtKB-UniRule"/>
</dbReference>
<dbReference type="GO" id="GO:0006223">
    <property type="term" value="P:uracil salvage"/>
    <property type="evidence" value="ECO:0007669"/>
    <property type="project" value="InterPro"/>
</dbReference>
<dbReference type="CDD" id="cd06223">
    <property type="entry name" value="PRTases_typeI"/>
    <property type="match status" value="1"/>
</dbReference>
<dbReference type="FunFam" id="3.40.50.2020:FF:000003">
    <property type="entry name" value="Uracil phosphoribosyltransferase"/>
    <property type="match status" value="1"/>
</dbReference>
<dbReference type="Gene3D" id="3.40.50.2020">
    <property type="match status" value="1"/>
</dbReference>
<dbReference type="HAMAP" id="MF_01218_B">
    <property type="entry name" value="Upp_B"/>
    <property type="match status" value="1"/>
</dbReference>
<dbReference type="InterPro" id="IPR000836">
    <property type="entry name" value="PRibTrfase_dom"/>
</dbReference>
<dbReference type="InterPro" id="IPR029057">
    <property type="entry name" value="PRTase-like"/>
</dbReference>
<dbReference type="InterPro" id="IPR034332">
    <property type="entry name" value="Upp_B"/>
</dbReference>
<dbReference type="InterPro" id="IPR050054">
    <property type="entry name" value="UPRTase/APRTase"/>
</dbReference>
<dbReference type="InterPro" id="IPR005765">
    <property type="entry name" value="Ura_phspho_trans"/>
</dbReference>
<dbReference type="NCBIfam" id="NF001097">
    <property type="entry name" value="PRK00129.1"/>
    <property type="match status" value="1"/>
</dbReference>
<dbReference type="NCBIfam" id="TIGR01091">
    <property type="entry name" value="upp"/>
    <property type="match status" value="1"/>
</dbReference>
<dbReference type="PANTHER" id="PTHR32315">
    <property type="entry name" value="ADENINE PHOSPHORIBOSYLTRANSFERASE"/>
    <property type="match status" value="1"/>
</dbReference>
<dbReference type="PANTHER" id="PTHR32315:SF4">
    <property type="entry name" value="URACIL PHOSPHORIBOSYLTRANSFERASE, CHLOROPLASTIC"/>
    <property type="match status" value="1"/>
</dbReference>
<dbReference type="Pfam" id="PF14681">
    <property type="entry name" value="UPRTase"/>
    <property type="match status" value="1"/>
</dbReference>
<dbReference type="SUPFAM" id="SSF53271">
    <property type="entry name" value="PRTase-like"/>
    <property type="match status" value="1"/>
</dbReference>
<name>UPP_WOLSU</name>
<keyword id="KW-0021">Allosteric enzyme</keyword>
<keyword id="KW-0328">Glycosyltransferase</keyword>
<keyword id="KW-0342">GTP-binding</keyword>
<keyword id="KW-0460">Magnesium</keyword>
<keyword id="KW-0547">Nucleotide-binding</keyword>
<keyword id="KW-1185">Reference proteome</keyword>
<keyword id="KW-0808">Transferase</keyword>
<feature type="chain" id="PRO_0000120912" description="Uracil phosphoribosyltransferase">
    <location>
        <begin position="1"/>
        <end position="208"/>
    </location>
</feature>
<feature type="binding site" evidence="1">
    <location>
        <position position="78"/>
    </location>
    <ligand>
        <name>5-phospho-alpha-D-ribose 1-diphosphate</name>
        <dbReference type="ChEBI" id="CHEBI:58017"/>
    </ligand>
</feature>
<feature type="binding site" evidence="1">
    <location>
        <position position="103"/>
    </location>
    <ligand>
        <name>5-phospho-alpha-D-ribose 1-diphosphate</name>
        <dbReference type="ChEBI" id="CHEBI:58017"/>
    </ligand>
</feature>
<feature type="binding site" evidence="1">
    <location>
        <begin position="130"/>
        <end position="138"/>
    </location>
    <ligand>
        <name>5-phospho-alpha-D-ribose 1-diphosphate</name>
        <dbReference type="ChEBI" id="CHEBI:58017"/>
    </ligand>
</feature>
<feature type="binding site" evidence="1">
    <location>
        <position position="193"/>
    </location>
    <ligand>
        <name>uracil</name>
        <dbReference type="ChEBI" id="CHEBI:17568"/>
    </ligand>
</feature>
<feature type="binding site" evidence="1">
    <location>
        <begin position="198"/>
        <end position="200"/>
    </location>
    <ligand>
        <name>uracil</name>
        <dbReference type="ChEBI" id="CHEBI:17568"/>
    </ligand>
</feature>
<feature type="binding site" evidence="1">
    <location>
        <position position="199"/>
    </location>
    <ligand>
        <name>5-phospho-alpha-D-ribose 1-diphosphate</name>
        <dbReference type="ChEBI" id="CHEBI:58017"/>
    </ligand>
</feature>
<accession>Q7M8H6</accession>
<organism>
    <name type="scientific">Wolinella succinogenes (strain ATCC 29543 / DSM 1740 / CCUG 13145 / JCM 31913 / LMG 7466 / NCTC 11488 / FDC 602W)</name>
    <name type="common">Vibrio succinogenes</name>
    <dbReference type="NCBI Taxonomy" id="273121"/>
    <lineage>
        <taxon>Bacteria</taxon>
        <taxon>Pseudomonadati</taxon>
        <taxon>Campylobacterota</taxon>
        <taxon>Epsilonproteobacteria</taxon>
        <taxon>Campylobacterales</taxon>
        <taxon>Helicobacteraceae</taxon>
        <taxon>Wolinella</taxon>
    </lineage>
</organism>
<evidence type="ECO:0000255" key="1">
    <source>
        <dbReference type="HAMAP-Rule" id="MF_01218"/>
    </source>
</evidence>